<organism>
    <name type="scientific">Escherichia coli (strain K12)</name>
    <dbReference type="NCBI Taxonomy" id="83333"/>
    <lineage>
        <taxon>Bacteria</taxon>
        <taxon>Pseudomonadati</taxon>
        <taxon>Pseudomonadota</taxon>
        <taxon>Gammaproteobacteria</taxon>
        <taxon>Enterobacterales</taxon>
        <taxon>Enterobacteriaceae</taxon>
        <taxon>Escherichia</taxon>
    </lineage>
</organism>
<name>DLDH_ECOLI</name>
<evidence type="ECO:0000250" key="1"/>
<evidence type="ECO:0000269" key="2">
    <source>
    </source>
</evidence>
<evidence type="ECO:0000269" key="3">
    <source>
    </source>
</evidence>
<evidence type="ECO:0000269" key="4">
    <source>
    </source>
</evidence>
<evidence type="ECO:0000305" key="5"/>
<evidence type="ECO:0007829" key="6">
    <source>
        <dbReference type="PDB" id="4JDR"/>
    </source>
</evidence>
<comment type="function">
    <text>Lipoamide dehydrogenase is a component of the glycine cleavage system as well as of the alpha-ketoacid dehydrogenase complexes.</text>
</comment>
<comment type="catalytic activity">
    <reaction>
        <text>N(6)-[(R)-dihydrolipoyl]-L-lysyl-[protein] + NAD(+) = N(6)-[(R)-lipoyl]-L-lysyl-[protein] + NADH + H(+)</text>
        <dbReference type="Rhea" id="RHEA:15045"/>
        <dbReference type="Rhea" id="RHEA-COMP:10474"/>
        <dbReference type="Rhea" id="RHEA-COMP:10475"/>
        <dbReference type="ChEBI" id="CHEBI:15378"/>
        <dbReference type="ChEBI" id="CHEBI:57540"/>
        <dbReference type="ChEBI" id="CHEBI:57945"/>
        <dbReference type="ChEBI" id="CHEBI:83099"/>
        <dbReference type="ChEBI" id="CHEBI:83100"/>
        <dbReference type="EC" id="1.8.1.4"/>
    </reaction>
</comment>
<comment type="cofactor">
    <cofactor evidence="1">
        <name>FAD</name>
        <dbReference type="ChEBI" id="CHEBI:57692"/>
    </cofactor>
    <text evidence="1">Binds 1 FAD per subunit.</text>
</comment>
<comment type="subunit">
    <text>Homodimer.</text>
</comment>
<comment type="interaction">
    <interactant intactId="EBI-542856">
        <id>P0A9P0</id>
    </interactant>
    <interactant intactId="EBI-542707">
        <id>P06959</id>
        <label>aceF</label>
    </interactant>
    <organismsDiffer>false</organismsDiffer>
    <experiments>3</experiments>
</comment>
<comment type="interaction">
    <interactant intactId="EBI-542856">
        <id>P0A9P0</id>
    </interactant>
    <interactant intactId="EBI-560582">
        <id>P75989</id>
        <label>bluR</label>
    </interactant>
    <organismsDiffer>false</organismsDiffer>
    <experiments>2</experiments>
</comment>
<comment type="interaction">
    <interactant intactId="EBI-542856">
        <id>P0A9P0</id>
    </interactant>
    <interactant intactId="EBI-552913">
        <id>P39346</id>
        <label>idnD</label>
    </interactant>
    <organismsDiffer>false</organismsDiffer>
    <experiments>2</experiments>
</comment>
<comment type="interaction">
    <interactant intactId="EBI-542856">
        <id>P0A9P0</id>
    </interactant>
    <interactant intactId="EBI-542856">
        <id>P0A9P0</id>
        <label>lpdA</label>
    </interactant>
    <organismsDiffer>false</organismsDiffer>
    <experiments>2</experiments>
</comment>
<comment type="interaction">
    <interactant intactId="EBI-542856">
        <id>P0A9P0</id>
    </interactant>
    <interactant intactId="EBI-558621">
        <id>P0AFG6</id>
        <label>sucB</label>
    </interactant>
    <organismsDiffer>false</organismsDiffer>
    <experiments>3</experiments>
</comment>
<comment type="interaction">
    <interactant intactId="EBI-542856">
        <id>P0A9P0</id>
    </interactant>
    <interactant intactId="EBI-559573">
        <id>P03018</id>
        <label>uvrD</label>
    </interactant>
    <organismsDiffer>false</organismsDiffer>
    <experiments>3</experiments>
</comment>
<comment type="interaction">
    <interactant intactId="EBI-542856">
        <id>P0A9P0</id>
    </interactant>
    <interactant intactId="EBI-559987">
        <id>P0AAR3</id>
        <label>ybaK</label>
    </interactant>
    <organismsDiffer>false</organismsDiffer>
    <experiments>2</experiments>
</comment>
<comment type="interaction">
    <interactant intactId="EBI-542856">
        <id>P0A9P0</id>
    </interactant>
    <interactant intactId="EBI-545197">
        <id>P77721</id>
        <label>ydjF</label>
    </interactant>
    <organismsDiffer>false</organismsDiffer>
    <experiments>2</experiments>
</comment>
<comment type="interaction">
    <interactant intactId="EBI-542856">
        <id>P0A9P0</id>
    </interactant>
    <interactant intactId="EBI-561028">
        <id>P52037</id>
        <label>ygfF</label>
    </interactant>
    <organismsDiffer>false</organismsDiffer>
    <experiments>2</experiments>
</comment>
<comment type="subcellular location">
    <subcellularLocation>
        <location evidence="2">Cytoplasm</location>
    </subcellularLocation>
    <subcellularLocation>
        <location evidence="2">Cell inner membrane</location>
        <topology evidence="2">Peripheral membrane protein</topology>
    </subcellularLocation>
</comment>
<comment type="miscellaneous">
    <text>The active site is a redox-active disulfide bond.</text>
</comment>
<comment type="similarity">
    <text evidence="5">Belongs to the class-I pyridine nucleotide-disulfide oxidoreductase family.</text>
</comment>
<comment type="sequence caution" evidence="5">
    <conflict type="erroneous initiation">
        <sequence resource="EMBL-CDS" id="CAA24742"/>
    </conflict>
</comment>
<accession>P0A9P0</accession>
<accession>P00391</accession>
<proteinExistence type="evidence at protein level"/>
<protein>
    <recommendedName>
        <fullName>Dihydrolipoyl dehydrogenase</fullName>
        <ecNumber>1.8.1.4</ecNumber>
    </recommendedName>
    <alternativeName>
        <fullName>Dihydrolipoamide dehydrogenase</fullName>
    </alternativeName>
    <alternativeName>
        <fullName>E3 component of pyruvate and 2-oxoglutarate dehydrogenases complexes</fullName>
    </alternativeName>
    <alternativeName>
        <fullName>Glycine cleavage system L protein</fullName>
    </alternativeName>
</protein>
<dbReference type="EC" id="1.8.1.4"/>
<dbReference type="EMBL" id="V01498">
    <property type="protein sequence ID" value="CAA24742.1"/>
    <property type="status" value="ALT_INIT"/>
    <property type="molecule type" value="Genomic_DNA"/>
</dbReference>
<dbReference type="EMBL" id="U00096">
    <property type="protein sequence ID" value="AAC73227.1"/>
    <property type="molecule type" value="Genomic_DNA"/>
</dbReference>
<dbReference type="EMBL" id="AP009048">
    <property type="protein sequence ID" value="BAB96686.2"/>
    <property type="molecule type" value="Genomic_DNA"/>
</dbReference>
<dbReference type="PIR" id="S45195">
    <property type="entry name" value="DEECLP"/>
</dbReference>
<dbReference type="RefSeq" id="NP_414658.1">
    <property type="nucleotide sequence ID" value="NC_000913.3"/>
</dbReference>
<dbReference type="RefSeq" id="WP_000102485.1">
    <property type="nucleotide sequence ID" value="NZ_STEB01000010.1"/>
</dbReference>
<dbReference type="PDB" id="4JDR">
    <property type="method" value="X-ray"/>
    <property type="resolution" value="2.50 A"/>
    <property type="chains" value="A/B=1-474"/>
</dbReference>
<dbReference type="PDBsum" id="4JDR"/>
<dbReference type="SMR" id="P0A9P0"/>
<dbReference type="BioGRID" id="4261370">
    <property type="interactions" value="39"/>
</dbReference>
<dbReference type="BioGRID" id="849254">
    <property type="interactions" value="3"/>
</dbReference>
<dbReference type="ComplexPortal" id="CPX-3921">
    <property type="entry name" value="2-oxoglutarate dehydrogenase complex"/>
</dbReference>
<dbReference type="ComplexPortal" id="CPX-3943">
    <property type="entry name" value="Pyruvate dehydrogenase complex"/>
</dbReference>
<dbReference type="ComplexPortal" id="CPX-3949">
    <property type="entry name" value="Glycine cleavage system complex"/>
</dbReference>
<dbReference type="DIP" id="DIP-6854N"/>
<dbReference type="FunCoup" id="P0A9P0">
    <property type="interactions" value="1101"/>
</dbReference>
<dbReference type="IntAct" id="P0A9P0">
    <property type="interactions" value="92"/>
</dbReference>
<dbReference type="STRING" id="511145.b0116"/>
<dbReference type="iPTMnet" id="P0A9P0"/>
<dbReference type="jPOST" id="P0A9P0"/>
<dbReference type="PaxDb" id="511145-b0116"/>
<dbReference type="EnsemblBacteria" id="AAC73227">
    <property type="protein sequence ID" value="AAC73227"/>
    <property type="gene ID" value="b0116"/>
</dbReference>
<dbReference type="GeneID" id="93777320"/>
<dbReference type="GeneID" id="944854"/>
<dbReference type="KEGG" id="ecj:JW0112"/>
<dbReference type="KEGG" id="eco:b0116"/>
<dbReference type="KEGG" id="ecoc:C3026_00485"/>
<dbReference type="PATRIC" id="fig|1411691.4.peg.2166"/>
<dbReference type="EchoBASE" id="EB0538"/>
<dbReference type="eggNOG" id="COG1249">
    <property type="taxonomic scope" value="Bacteria"/>
</dbReference>
<dbReference type="HOGENOM" id="CLU_016755_0_3_6"/>
<dbReference type="InParanoid" id="P0A9P0"/>
<dbReference type="OMA" id="HMVGDRM"/>
<dbReference type="OrthoDB" id="9800167at2"/>
<dbReference type="PhylomeDB" id="P0A9P0"/>
<dbReference type="BioCyc" id="EcoCyc:E3-MONOMER"/>
<dbReference type="BioCyc" id="MetaCyc:E3-MONOMER"/>
<dbReference type="BRENDA" id="1.2.1.104">
    <property type="organism ID" value="2026"/>
</dbReference>
<dbReference type="BRENDA" id="1.4.1.27">
    <property type="organism ID" value="2026"/>
</dbReference>
<dbReference type="BRENDA" id="1.8.1.4">
    <property type="organism ID" value="2026"/>
</dbReference>
<dbReference type="SABIO-RK" id="P0A9P0"/>
<dbReference type="EvolutionaryTrace" id="P0A9P0"/>
<dbReference type="PRO" id="PR:P0A9P0"/>
<dbReference type="Proteomes" id="UP000000625">
    <property type="component" value="Chromosome"/>
</dbReference>
<dbReference type="GO" id="GO:0005737">
    <property type="term" value="C:cytoplasm"/>
    <property type="evidence" value="ECO:0000314"/>
    <property type="project" value="ComplexPortal"/>
</dbReference>
<dbReference type="GO" id="GO:0005829">
    <property type="term" value="C:cytosol"/>
    <property type="evidence" value="ECO:0000314"/>
    <property type="project" value="EcoCyc"/>
</dbReference>
<dbReference type="GO" id="GO:0005960">
    <property type="term" value="C:glycine cleavage complex"/>
    <property type="evidence" value="ECO:0000315"/>
    <property type="project" value="EcoCyc"/>
</dbReference>
<dbReference type="GO" id="GO:0016020">
    <property type="term" value="C:membrane"/>
    <property type="evidence" value="ECO:0007005"/>
    <property type="project" value="UniProtKB"/>
</dbReference>
<dbReference type="GO" id="GO:0045252">
    <property type="term" value="C:oxoglutarate dehydrogenase complex"/>
    <property type="evidence" value="ECO:0000353"/>
    <property type="project" value="ComplexPortal"/>
</dbReference>
<dbReference type="GO" id="GO:0005886">
    <property type="term" value="C:plasma membrane"/>
    <property type="evidence" value="ECO:0007669"/>
    <property type="project" value="UniProtKB-SubCell"/>
</dbReference>
<dbReference type="GO" id="GO:0045254">
    <property type="term" value="C:pyruvate dehydrogenase complex"/>
    <property type="evidence" value="ECO:0000303"/>
    <property type="project" value="ComplexPortal"/>
</dbReference>
<dbReference type="GO" id="GO:0004148">
    <property type="term" value="F:dihydrolipoyl dehydrogenase (NADH) activity"/>
    <property type="evidence" value="ECO:0000314"/>
    <property type="project" value="EcoCyc"/>
</dbReference>
<dbReference type="GO" id="GO:0015036">
    <property type="term" value="F:disulfide oxidoreductase activity"/>
    <property type="evidence" value="ECO:0000314"/>
    <property type="project" value="EcoliWiki"/>
</dbReference>
<dbReference type="GO" id="GO:0050660">
    <property type="term" value="F:flavin adenine dinucleotide binding"/>
    <property type="evidence" value="ECO:0000314"/>
    <property type="project" value="EcoliWiki"/>
</dbReference>
<dbReference type="GO" id="GO:0042802">
    <property type="term" value="F:identical protein binding"/>
    <property type="evidence" value="ECO:0000353"/>
    <property type="project" value="IntAct"/>
</dbReference>
<dbReference type="GO" id="GO:0008270">
    <property type="term" value="F:zinc ion binding"/>
    <property type="evidence" value="ECO:0000314"/>
    <property type="project" value="EcoliWiki"/>
</dbReference>
<dbReference type="GO" id="GO:0006103">
    <property type="term" value="P:2-oxoglutarate metabolic process"/>
    <property type="evidence" value="ECO:0000315"/>
    <property type="project" value="EcoliWiki"/>
</dbReference>
<dbReference type="GO" id="GO:0019464">
    <property type="term" value="P:glycine decarboxylation via glycine cleavage system"/>
    <property type="evidence" value="ECO:0000315"/>
    <property type="project" value="EcoCyc"/>
</dbReference>
<dbReference type="GO" id="GO:0006730">
    <property type="term" value="P:one-carbon metabolic process"/>
    <property type="evidence" value="ECO:0000303"/>
    <property type="project" value="ComplexPortal"/>
</dbReference>
<dbReference type="GO" id="GO:0042867">
    <property type="term" value="P:pyruvate catabolic process"/>
    <property type="evidence" value="ECO:0000303"/>
    <property type="project" value="ComplexPortal"/>
</dbReference>
<dbReference type="GO" id="GO:0006090">
    <property type="term" value="P:pyruvate metabolic process"/>
    <property type="evidence" value="ECO:0000314"/>
    <property type="project" value="EcoliWiki"/>
</dbReference>
<dbReference type="GO" id="GO:0006979">
    <property type="term" value="P:response to oxidative stress"/>
    <property type="evidence" value="ECO:0000315"/>
    <property type="project" value="EcoCyc"/>
</dbReference>
<dbReference type="GO" id="GO:0006099">
    <property type="term" value="P:tricarboxylic acid cycle"/>
    <property type="evidence" value="ECO:0000314"/>
    <property type="project" value="ComplexPortal"/>
</dbReference>
<dbReference type="FunFam" id="3.30.390.30:FF:000001">
    <property type="entry name" value="Dihydrolipoyl dehydrogenase"/>
    <property type="match status" value="1"/>
</dbReference>
<dbReference type="FunFam" id="3.50.50.60:FF:000014">
    <property type="entry name" value="Dihydrolipoyl dehydrogenase"/>
    <property type="match status" value="1"/>
</dbReference>
<dbReference type="FunFam" id="3.50.50.60:FF:000001">
    <property type="entry name" value="Dihydrolipoyl dehydrogenase, mitochondrial"/>
    <property type="match status" value="1"/>
</dbReference>
<dbReference type="Gene3D" id="3.30.390.30">
    <property type="match status" value="1"/>
</dbReference>
<dbReference type="Gene3D" id="3.50.50.60">
    <property type="entry name" value="FAD/NAD(P)-binding domain"/>
    <property type="match status" value="2"/>
</dbReference>
<dbReference type="InterPro" id="IPR050151">
    <property type="entry name" value="Class-I_Pyr_Nuc-Dis_Oxidored"/>
</dbReference>
<dbReference type="InterPro" id="IPR036188">
    <property type="entry name" value="FAD/NAD-bd_sf"/>
</dbReference>
<dbReference type="InterPro" id="IPR023753">
    <property type="entry name" value="FAD/NAD-binding_dom"/>
</dbReference>
<dbReference type="InterPro" id="IPR016156">
    <property type="entry name" value="FAD/NAD-linked_Rdtase_dimer_sf"/>
</dbReference>
<dbReference type="InterPro" id="IPR006258">
    <property type="entry name" value="Lipoamide_DH"/>
</dbReference>
<dbReference type="InterPro" id="IPR001100">
    <property type="entry name" value="Pyr_nuc-diS_OxRdtase"/>
</dbReference>
<dbReference type="InterPro" id="IPR004099">
    <property type="entry name" value="Pyr_nucl-diS_OxRdtase_dimer"/>
</dbReference>
<dbReference type="InterPro" id="IPR012999">
    <property type="entry name" value="Pyr_OxRdtase_I_AS"/>
</dbReference>
<dbReference type="NCBIfam" id="TIGR01350">
    <property type="entry name" value="lipoamide_DH"/>
    <property type="match status" value="1"/>
</dbReference>
<dbReference type="PANTHER" id="PTHR22912:SF160">
    <property type="entry name" value="DIHYDROLIPOYL DEHYDROGENASE"/>
    <property type="match status" value="1"/>
</dbReference>
<dbReference type="PANTHER" id="PTHR22912">
    <property type="entry name" value="DISULFIDE OXIDOREDUCTASE"/>
    <property type="match status" value="1"/>
</dbReference>
<dbReference type="Pfam" id="PF07992">
    <property type="entry name" value="Pyr_redox_2"/>
    <property type="match status" value="1"/>
</dbReference>
<dbReference type="Pfam" id="PF02852">
    <property type="entry name" value="Pyr_redox_dim"/>
    <property type="match status" value="1"/>
</dbReference>
<dbReference type="PIRSF" id="PIRSF000350">
    <property type="entry name" value="Mercury_reductase_MerA"/>
    <property type="match status" value="1"/>
</dbReference>
<dbReference type="PRINTS" id="PR00368">
    <property type="entry name" value="FADPNR"/>
</dbReference>
<dbReference type="PRINTS" id="PR00411">
    <property type="entry name" value="PNDRDTASEI"/>
</dbReference>
<dbReference type="SUPFAM" id="SSF51905">
    <property type="entry name" value="FAD/NAD(P)-binding domain"/>
    <property type="match status" value="1"/>
</dbReference>
<dbReference type="SUPFAM" id="SSF55424">
    <property type="entry name" value="FAD/NAD-linked reductases, dimerisation (C-terminal) domain"/>
    <property type="match status" value="1"/>
</dbReference>
<dbReference type="PROSITE" id="PS00076">
    <property type="entry name" value="PYRIDINE_REDOX_1"/>
    <property type="match status" value="1"/>
</dbReference>
<keyword id="KW-0002">3D-structure</keyword>
<keyword id="KW-0007">Acetylation</keyword>
<keyword id="KW-0997">Cell inner membrane</keyword>
<keyword id="KW-1003">Cell membrane</keyword>
<keyword id="KW-0963">Cytoplasm</keyword>
<keyword id="KW-0903">Direct protein sequencing</keyword>
<keyword id="KW-1015">Disulfide bond</keyword>
<keyword id="KW-0274">FAD</keyword>
<keyword id="KW-0285">Flavoprotein</keyword>
<keyword id="KW-0472">Membrane</keyword>
<keyword id="KW-0520">NAD</keyword>
<keyword id="KW-0560">Oxidoreductase</keyword>
<keyword id="KW-0676">Redox-active center</keyword>
<keyword id="KW-1185">Reference proteome</keyword>
<gene>
    <name type="primary">lpdA</name>
    <name type="synonym">lpd</name>
    <name type="ordered locus">b0116</name>
    <name type="ordered locus">JW0112</name>
</gene>
<sequence>MSTEIKTQVVVLGAGPAGYSAAFRCADLGLETVIVERYNTLGGVCLNVGCIPSKALLHVAKVIEEAKALAEHGIVFGEPKTDIDKIRTWKEKVINQLTGGLAGMAKGRKVKVVNGLGKFTGANTLEVEGENGKTVINFDNAIIAAGSRPIQLPFIPHEDPRIWDSTDALELKEVPERLLVMGGGIIGLEMGTVYHALGSQIDVVEMFDQVIPAADKDIVKVFTKRISKKFNLMLETKVTAVEAKEDGIYVTMEGKKAPAEPQRYDAVLVAIGRVPNGKNLDAGKAGVEVDDRGFIRVDKQLRTNVPHIFAIGDIVGQPMLAHKGVHEGHVAAEVIAGKKHYFDPKVIPSIAYTEPEVAWVGLTEKEAKEKGISYETATFPWAASGRAIASDCADGMTKLIFDKESHRVIGGAIVGTNGGELLGEIGLAIEMGCDAEDIALTIHAHPTLHESVGLAAEVFEGSITDLPNPKAKKK</sequence>
<reference key="1">
    <citation type="journal article" date="1983" name="Eur. J. Biochem.">
        <title>Nucleotide sequence of the lipoamide dehydrogenase gene of Escherichia coli K12.</title>
        <authorList>
            <person name="Stephens P.E."/>
            <person name="Lewis H.M."/>
            <person name="Darlison M.G."/>
            <person name="Guest J.R."/>
        </authorList>
    </citation>
    <scope>NUCLEOTIDE SEQUENCE [GENOMIC DNA]</scope>
</reference>
<reference key="2">
    <citation type="journal article" date="1994" name="Nucleic Acids Res.">
        <title>Systematic sequencing of the Escherichia coli genome: analysis of the 2.4-4.1 min (110,917-193,643 bp) region.</title>
        <authorList>
            <person name="Fujita N."/>
            <person name="Mori H."/>
            <person name="Yura T."/>
            <person name="Ishihama A."/>
        </authorList>
    </citation>
    <scope>NUCLEOTIDE SEQUENCE [LARGE SCALE GENOMIC DNA]</scope>
    <source>
        <strain>K12 / W3110 / ATCC 27325 / DSM 5911</strain>
    </source>
</reference>
<reference key="3">
    <citation type="journal article" date="1997" name="Science">
        <title>The complete genome sequence of Escherichia coli K-12.</title>
        <authorList>
            <person name="Blattner F.R."/>
            <person name="Plunkett G. III"/>
            <person name="Bloch C.A."/>
            <person name="Perna N.T."/>
            <person name="Burland V."/>
            <person name="Riley M."/>
            <person name="Collado-Vides J."/>
            <person name="Glasner J.D."/>
            <person name="Rode C.K."/>
            <person name="Mayhew G.F."/>
            <person name="Gregor J."/>
            <person name="Davis N.W."/>
            <person name="Kirkpatrick H.A."/>
            <person name="Goeden M.A."/>
            <person name="Rose D.J."/>
            <person name="Mau B."/>
            <person name="Shao Y."/>
        </authorList>
    </citation>
    <scope>NUCLEOTIDE SEQUENCE [LARGE SCALE GENOMIC DNA]</scope>
    <source>
        <strain>K12 / MG1655 / ATCC 47076</strain>
    </source>
</reference>
<reference key="4">
    <citation type="journal article" date="2006" name="Mol. Syst. Biol.">
        <title>Highly accurate genome sequences of Escherichia coli K-12 strains MG1655 and W3110.</title>
        <authorList>
            <person name="Hayashi K."/>
            <person name="Morooka N."/>
            <person name="Yamamoto Y."/>
            <person name="Fujita K."/>
            <person name="Isono K."/>
            <person name="Choi S."/>
            <person name="Ohtsubo E."/>
            <person name="Baba T."/>
            <person name="Wanner B.L."/>
            <person name="Mori H."/>
            <person name="Horiuchi T."/>
        </authorList>
    </citation>
    <scope>NUCLEOTIDE SEQUENCE [LARGE SCALE GENOMIC DNA]</scope>
    <source>
        <strain>K12 / W3110 / ATCC 27325 / DSM 5911</strain>
    </source>
</reference>
<reference key="5">
    <citation type="journal article" date="1997" name="Electrophoresis">
        <title>Comparing the predicted and observed properties of proteins encoded in the genome of Escherichia coli K-12.</title>
        <authorList>
            <person name="Link A.J."/>
            <person name="Robison K."/>
            <person name="Church G.M."/>
        </authorList>
    </citation>
    <scope>PROTEIN SEQUENCE OF 2-13</scope>
    <source>
        <strain>K12 / EMG2</strain>
    </source>
</reference>
<reference key="6">
    <citation type="journal article" date="1990" name="J. Bacteriol.">
        <title>The lpd gene product functions as the L protein in the Escherichia coli glycine cleavage enzyme system.</title>
        <authorList>
            <person name="Steiert P.S."/>
            <person name="Stauffer L.T."/>
            <person name="Stauffer G.V."/>
        </authorList>
    </citation>
    <scope>INVOLVEMENT IN GLYCINE CLEAVAGE SYSTEM</scope>
</reference>
<reference key="7">
    <citation type="journal article" date="1997" name="Electrophoresis">
        <title>Escherichia coli proteome analysis using the gene-protein database.</title>
        <authorList>
            <person name="VanBogelen R.A."/>
            <person name="Abshire K.Z."/>
            <person name="Moldover B."/>
            <person name="Olson E.R."/>
            <person name="Neidhardt F.C."/>
        </authorList>
    </citation>
    <scope>IDENTIFICATION BY 2D-GEL</scope>
</reference>
<reference key="8">
    <citation type="journal article" date="2005" name="J. Biol. Chem.">
        <title>Protein complexes of the Escherichia coli cell envelope.</title>
        <authorList>
            <person name="Stenberg F."/>
            <person name="Chovanec P."/>
            <person name="Maslen S.L."/>
            <person name="Robinson C.V."/>
            <person name="Ilag L."/>
            <person name="von Heijne G."/>
            <person name="Daley D.O."/>
        </authorList>
    </citation>
    <scope>SUBCELLULAR LOCATION</scope>
    <source>
        <strain>BL21-DE3</strain>
    </source>
</reference>
<reference key="9">
    <citation type="journal article" date="2009" name="Mol. Cell. Proteomics">
        <title>Lysine acetylation is a highly abundant and evolutionarily conserved modification in Escherichia coli.</title>
        <authorList>
            <person name="Zhang J."/>
            <person name="Sprung R."/>
            <person name="Pei J."/>
            <person name="Tan X."/>
            <person name="Kim S."/>
            <person name="Zhu H."/>
            <person name="Liu C.F."/>
            <person name="Grishin N.V."/>
            <person name="Zhao Y."/>
        </authorList>
    </citation>
    <scope>ACETYLATION [LARGE SCALE ANALYSIS] AT LYS-220</scope>
    <scope>IDENTIFICATION BY MASS SPECTROMETRY</scope>
    <source>
        <strain>K12 / JW1106</strain>
        <strain>K12 / MG1655 / ATCC 47076</strain>
    </source>
</reference>
<feature type="initiator methionine" description="Removed" evidence="4">
    <location>
        <position position="1"/>
    </location>
</feature>
<feature type="chain" id="PRO_0000068027" description="Dihydrolipoyl dehydrogenase">
    <location>
        <begin position="2"/>
        <end position="474"/>
    </location>
</feature>
<feature type="active site" description="Proton acceptor" evidence="1">
    <location>
        <position position="445"/>
    </location>
</feature>
<feature type="binding site" evidence="1">
    <location>
        <begin position="36"/>
        <end position="45"/>
    </location>
    <ligand>
        <name>FAD</name>
        <dbReference type="ChEBI" id="CHEBI:57692"/>
    </ligand>
</feature>
<feature type="binding site" evidence="1">
    <location>
        <position position="54"/>
    </location>
    <ligand>
        <name>FAD</name>
        <dbReference type="ChEBI" id="CHEBI:57692"/>
    </ligand>
</feature>
<feature type="binding site" evidence="1">
    <location>
        <position position="117"/>
    </location>
    <ligand>
        <name>FAD</name>
        <dbReference type="ChEBI" id="CHEBI:57692"/>
    </ligand>
</feature>
<feature type="binding site" evidence="1">
    <location>
        <begin position="182"/>
        <end position="186"/>
    </location>
    <ligand>
        <name>NAD(+)</name>
        <dbReference type="ChEBI" id="CHEBI:57540"/>
    </ligand>
</feature>
<feature type="binding site" evidence="1">
    <location>
        <position position="205"/>
    </location>
    <ligand>
        <name>NAD(+)</name>
        <dbReference type="ChEBI" id="CHEBI:57540"/>
    </ligand>
</feature>
<feature type="binding site" evidence="1">
    <location>
        <position position="238"/>
    </location>
    <ligand>
        <name>NAD(+)</name>
        <dbReference type="ChEBI" id="CHEBI:57540"/>
    </ligand>
</feature>
<feature type="binding site" evidence="1">
    <location>
        <begin position="270"/>
        <end position="273"/>
    </location>
    <ligand>
        <name>NAD(+)</name>
        <dbReference type="ChEBI" id="CHEBI:57540"/>
    </ligand>
</feature>
<feature type="binding site" evidence="1">
    <location>
        <position position="313"/>
    </location>
    <ligand>
        <name>FAD</name>
        <dbReference type="ChEBI" id="CHEBI:57692"/>
    </ligand>
</feature>
<feature type="binding site" evidence="1">
    <location>
        <position position="321"/>
    </location>
    <ligand>
        <name>FAD</name>
        <dbReference type="ChEBI" id="CHEBI:57692"/>
    </ligand>
</feature>
<feature type="modified residue" description="N6-acetyllysine" evidence="3">
    <location>
        <position position="220"/>
    </location>
</feature>
<feature type="disulfide bond" description="Redox-active" evidence="1">
    <location>
        <begin position="45"/>
        <end position="50"/>
    </location>
</feature>
<feature type="strand" evidence="6">
    <location>
        <begin position="3"/>
        <end position="12"/>
    </location>
</feature>
<feature type="helix" evidence="6">
    <location>
        <begin position="16"/>
        <end position="27"/>
    </location>
</feature>
<feature type="strand" evidence="6">
    <location>
        <begin position="32"/>
        <end position="42"/>
    </location>
</feature>
<feature type="helix" evidence="6">
    <location>
        <begin position="43"/>
        <end position="47"/>
    </location>
</feature>
<feature type="helix" evidence="6">
    <location>
        <begin position="50"/>
        <end position="68"/>
    </location>
</feature>
<feature type="helix" evidence="6">
    <location>
        <begin position="69"/>
        <end position="72"/>
    </location>
</feature>
<feature type="helix" evidence="6">
    <location>
        <begin position="83"/>
        <end position="107"/>
    </location>
</feature>
<feature type="strand" evidence="6">
    <location>
        <begin position="111"/>
        <end position="121"/>
    </location>
</feature>
<feature type="strand" evidence="6">
    <location>
        <begin position="124"/>
        <end position="128"/>
    </location>
</feature>
<feature type="strand" evidence="6">
    <location>
        <begin position="134"/>
        <end position="143"/>
    </location>
</feature>
<feature type="strand" evidence="6">
    <location>
        <begin position="147"/>
        <end position="149"/>
    </location>
</feature>
<feature type="strand" evidence="6">
    <location>
        <begin position="153"/>
        <end position="155"/>
    </location>
</feature>
<feature type="helix" evidence="6">
    <location>
        <begin position="165"/>
        <end position="169"/>
    </location>
</feature>
<feature type="strand" evidence="6">
    <location>
        <begin position="176"/>
        <end position="181"/>
    </location>
</feature>
<feature type="helix" evidence="6">
    <location>
        <begin position="185"/>
        <end position="196"/>
    </location>
</feature>
<feature type="strand" evidence="6">
    <location>
        <begin position="200"/>
        <end position="211"/>
    </location>
</feature>
<feature type="helix" evidence="6">
    <location>
        <begin position="216"/>
        <end position="226"/>
    </location>
</feature>
<feature type="turn" evidence="6">
    <location>
        <begin position="227"/>
        <end position="229"/>
    </location>
</feature>
<feature type="strand" evidence="6">
    <location>
        <begin position="230"/>
        <end position="244"/>
    </location>
</feature>
<feature type="strand" evidence="6">
    <location>
        <begin position="247"/>
        <end position="254"/>
    </location>
</feature>
<feature type="strand" evidence="6">
    <location>
        <begin position="262"/>
        <end position="269"/>
    </location>
</feature>
<feature type="strand" evidence="6">
    <location>
        <begin position="273"/>
        <end position="275"/>
    </location>
</feature>
<feature type="helix" evidence="6">
    <location>
        <begin position="277"/>
        <end position="279"/>
    </location>
</feature>
<feature type="helix" evidence="6">
    <location>
        <begin position="282"/>
        <end position="285"/>
    </location>
</feature>
<feature type="strand" evidence="6">
    <location>
        <begin position="308"/>
        <end position="310"/>
    </location>
</feature>
<feature type="helix" evidence="6">
    <location>
        <begin position="312"/>
        <end position="315"/>
    </location>
</feature>
<feature type="helix" evidence="6">
    <location>
        <begin position="321"/>
        <end position="335"/>
    </location>
</feature>
<feature type="strand" evidence="6">
    <location>
        <begin position="349"/>
        <end position="351"/>
    </location>
</feature>
<feature type="strand" evidence="6">
    <location>
        <begin position="353"/>
        <end position="361"/>
    </location>
</feature>
<feature type="helix" evidence="6">
    <location>
        <begin position="364"/>
        <end position="369"/>
    </location>
</feature>
<feature type="strand" evidence="6">
    <location>
        <begin position="374"/>
        <end position="380"/>
    </location>
</feature>
<feature type="helix" evidence="6">
    <location>
        <begin position="381"/>
        <end position="383"/>
    </location>
</feature>
<feature type="helix" evidence="6">
    <location>
        <begin position="385"/>
        <end position="389"/>
    </location>
</feature>
<feature type="strand" evidence="6">
    <location>
        <begin position="396"/>
        <end position="402"/>
    </location>
</feature>
<feature type="turn" evidence="6">
    <location>
        <begin position="403"/>
        <end position="405"/>
    </location>
</feature>
<feature type="strand" evidence="6">
    <location>
        <begin position="407"/>
        <end position="415"/>
    </location>
</feature>
<feature type="helix" evidence="6">
    <location>
        <begin position="418"/>
        <end position="421"/>
    </location>
</feature>
<feature type="helix" evidence="6">
    <location>
        <begin position="422"/>
        <end position="430"/>
    </location>
</feature>
<feature type="helix" evidence="6">
    <location>
        <begin position="435"/>
        <end position="440"/>
    </location>
</feature>
<feature type="helix" evidence="6">
    <location>
        <begin position="450"/>
        <end position="459"/>
    </location>
</feature>